<dbReference type="EMBL" id="AF034964">
    <property type="protein sequence ID" value="AAC62516.1"/>
    <property type="molecule type" value="mRNA"/>
</dbReference>
<dbReference type="SMR" id="P61861"/>
<dbReference type="GO" id="GO:0016460">
    <property type="term" value="C:myosin II complex"/>
    <property type="evidence" value="ECO:0007669"/>
    <property type="project" value="TreeGrafter"/>
</dbReference>
<dbReference type="GO" id="GO:0005509">
    <property type="term" value="F:calcium ion binding"/>
    <property type="evidence" value="ECO:0007669"/>
    <property type="project" value="InterPro"/>
</dbReference>
<dbReference type="CDD" id="cd00051">
    <property type="entry name" value="EFh"/>
    <property type="match status" value="2"/>
</dbReference>
<dbReference type="FunFam" id="1.10.238.10:FF:000058">
    <property type="entry name" value="Calmodulin"/>
    <property type="match status" value="1"/>
</dbReference>
<dbReference type="FunFam" id="1.10.238.10:FF:000257">
    <property type="entry name" value="Calmodulin"/>
    <property type="match status" value="1"/>
</dbReference>
<dbReference type="FunFam" id="1.10.238.10:FF:000027">
    <property type="entry name" value="Calmodulin (CaM)"/>
    <property type="match status" value="1"/>
</dbReference>
<dbReference type="Gene3D" id="1.10.238.10">
    <property type="entry name" value="EF-hand"/>
    <property type="match status" value="3"/>
</dbReference>
<dbReference type="InterPro" id="IPR050230">
    <property type="entry name" value="CALM/Myosin/TropC-like"/>
</dbReference>
<dbReference type="InterPro" id="IPR011992">
    <property type="entry name" value="EF-hand-dom_pair"/>
</dbReference>
<dbReference type="InterPro" id="IPR018247">
    <property type="entry name" value="EF_Hand_1_Ca_BS"/>
</dbReference>
<dbReference type="InterPro" id="IPR002048">
    <property type="entry name" value="EF_hand_dom"/>
</dbReference>
<dbReference type="PANTHER" id="PTHR23048:SF0">
    <property type="entry name" value="CALMODULIN LIKE 3"/>
    <property type="match status" value="1"/>
</dbReference>
<dbReference type="PANTHER" id="PTHR23048">
    <property type="entry name" value="MYOSIN LIGHT CHAIN 1, 3"/>
    <property type="match status" value="1"/>
</dbReference>
<dbReference type="Pfam" id="PF13499">
    <property type="entry name" value="EF-hand_7"/>
    <property type="match status" value="2"/>
</dbReference>
<dbReference type="PRINTS" id="PR00450">
    <property type="entry name" value="RECOVERIN"/>
</dbReference>
<dbReference type="SMART" id="SM00054">
    <property type="entry name" value="EFh"/>
    <property type="match status" value="4"/>
</dbReference>
<dbReference type="SMART" id="SM01184">
    <property type="entry name" value="efhand_Ca_insen"/>
    <property type="match status" value="1"/>
</dbReference>
<dbReference type="SUPFAM" id="SSF47473">
    <property type="entry name" value="EF-hand"/>
    <property type="match status" value="1"/>
</dbReference>
<dbReference type="PROSITE" id="PS00018">
    <property type="entry name" value="EF_HAND_1"/>
    <property type="match status" value="4"/>
</dbReference>
<dbReference type="PROSITE" id="PS50222">
    <property type="entry name" value="EF_HAND_2"/>
    <property type="match status" value="4"/>
</dbReference>
<accession>P61861</accession>
<accession>P40907</accession>
<accession>Q02052</accession>
<name>CALM_COLGL</name>
<comment type="function">
    <text>Calmodulin mediates the control of a large number of enzymes, ion channels and other proteins by Ca(2+). Among the enzymes to be stimulated by the calmodulin-Ca(2+) complex are a number of protein kinases and phosphatases.</text>
</comment>
<comment type="miscellaneous">
    <text>This protein has four functional calcium-binding sites.</text>
</comment>
<comment type="similarity">
    <text evidence="3">Belongs to the calmodulin family.</text>
</comment>
<evidence type="ECO:0000250" key="1"/>
<evidence type="ECO:0000255" key="2">
    <source>
        <dbReference type="PROSITE-ProRule" id="PRU00448"/>
    </source>
</evidence>
<evidence type="ECO:0000305" key="3"/>
<proteinExistence type="evidence at transcript level"/>
<keyword id="KW-0007">Acetylation</keyword>
<keyword id="KW-0106">Calcium</keyword>
<keyword id="KW-0479">Metal-binding</keyword>
<keyword id="KW-0677">Repeat</keyword>
<feature type="initiator methionine" description="Removed" evidence="1">
    <location>
        <position position="1"/>
    </location>
</feature>
<feature type="chain" id="PRO_0000198316" description="Calmodulin">
    <location>
        <begin position="2"/>
        <end position="149"/>
    </location>
</feature>
<feature type="domain" description="EF-hand 1" evidence="2">
    <location>
        <begin position="8"/>
        <end position="43"/>
    </location>
</feature>
<feature type="domain" description="EF-hand 2" evidence="2">
    <location>
        <begin position="44"/>
        <end position="79"/>
    </location>
</feature>
<feature type="domain" description="EF-hand 3" evidence="2">
    <location>
        <begin position="81"/>
        <end position="116"/>
    </location>
</feature>
<feature type="domain" description="EF-hand 4" evidence="2">
    <location>
        <begin position="117"/>
        <end position="149"/>
    </location>
</feature>
<feature type="binding site" evidence="2">
    <location>
        <position position="21"/>
    </location>
    <ligand>
        <name>Ca(2+)</name>
        <dbReference type="ChEBI" id="CHEBI:29108"/>
        <label>1</label>
    </ligand>
</feature>
<feature type="binding site" evidence="2">
    <location>
        <position position="23"/>
    </location>
    <ligand>
        <name>Ca(2+)</name>
        <dbReference type="ChEBI" id="CHEBI:29108"/>
        <label>1</label>
    </ligand>
</feature>
<feature type="binding site" evidence="2">
    <location>
        <position position="25"/>
    </location>
    <ligand>
        <name>Ca(2+)</name>
        <dbReference type="ChEBI" id="CHEBI:29108"/>
        <label>1</label>
    </ligand>
</feature>
<feature type="binding site" evidence="2">
    <location>
        <position position="27"/>
    </location>
    <ligand>
        <name>Ca(2+)</name>
        <dbReference type="ChEBI" id="CHEBI:29108"/>
        <label>1</label>
    </ligand>
</feature>
<feature type="binding site" evidence="2">
    <location>
        <position position="32"/>
    </location>
    <ligand>
        <name>Ca(2+)</name>
        <dbReference type="ChEBI" id="CHEBI:29108"/>
        <label>1</label>
    </ligand>
</feature>
<feature type="binding site" evidence="2">
    <location>
        <position position="57"/>
    </location>
    <ligand>
        <name>Ca(2+)</name>
        <dbReference type="ChEBI" id="CHEBI:29108"/>
        <label>2</label>
    </ligand>
</feature>
<feature type="binding site" evidence="2">
    <location>
        <position position="59"/>
    </location>
    <ligand>
        <name>Ca(2+)</name>
        <dbReference type="ChEBI" id="CHEBI:29108"/>
        <label>2</label>
    </ligand>
</feature>
<feature type="binding site" evidence="2">
    <location>
        <position position="61"/>
    </location>
    <ligand>
        <name>Ca(2+)</name>
        <dbReference type="ChEBI" id="CHEBI:29108"/>
        <label>2</label>
    </ligand>
</feature>
<feature type="binding site" evidence="2">
    <location>
        <position position="63"/>
    </location>
    <ligand>
        <name>Ca(2+)</name>
        <dbReference type="ChEBI" id="CHEBI:29108"/>
        <label>2</label>
    </ligand>
</feature>
<feature type="binding site" evidence="2">
    <location>
        <position position="68"/>
    </location>
    <ligand>
        <name>Ca(2+)</name>
        <dbReference type="ChEBI" id="CHEBI:29108"/>
        <label>2</label>
    </ligand>
</feature>
<feature type="binding site" evidence="2">
    <location>
        <position position="94"/>
    </location>
    <ligand>
        <name>Ca(2+)</name>
        <dbReference type="ChEBI" id="CHEBI:29108"/>
        <label>3</label>
    </ligand>
</feature>
<feature type="binding site" evidence="2">
    <location>
        <position position="96"/>
    </location>
    <ligand>
        <name>Ca(2+)</name>
        <dbReference type="ChEBI" id="CHEBI:29108"/>
        <label>3</label>
    </ligand>
</feature>
<feature type="binding site" evidence="2">
    <location>
        <position position="98"/>
    </location>
    <ligand>
        <name>Ca(2+)</name>
        <dbReference type="ChEBI" id="CHEBI:29108"/>
        <label>3</label>
    </ligand>
</feature>
<feature type="binding site" evidence="2">
    <location>
        <position position="105"/>
    </location>
    <ligand>
        <name>Ca(2+)</name>
        <dbReference type="ChEBI" id="CHEBI:29108"/>
        <label>3</label>
    </ligand>
</feature>
<feature type="binding site" evidence="2">
    <location>
        <position position="130"/>
    </location>
    <ligand>
        <name>Ca(2+)</name>
        <dbReference type="ChEBI" id="CHEBI:29108"/>
        <label>4</label>
    </ligand>
</feature>
<feature type="binding site" evidence="2">
    <location>
        <position position="132"/>
    </location>
    <ligand>
        <name>Ca(2+)</name>
        <dbReference type="ChEBI" id="CHEBI:29108"/>
        <label>4</label>
    </ligand>
</feature>
<feature type="binding site" evidence="2">
    <location>
        <position position="134"/>
    </location>
    <ligand>
        <name>Ca(2+)</name>
        <dbReference type="ChEBI" id="CHEBI:29108"/>
        <label>4</label>
    </ligand>
</feature>
<feature type="binding site" evidence="2">
    <location>
        <position position="136"/>
    </location>
    <ligand>
        <name>Ca(2+)</name>
        <dbReference type="ChEBI" id="CHEBI:29108"/>
        <label>4</label>
    </ligand>
</feature>
<feature type="binding site" evidence="2">
    <location>
        <position position="141"/>
    </location>
    <ligand>
        <name>Ca(2+)</name>
        <dbReference type="ChEBI" id="CHEBI:29108"/>
        <label>4</label>
    </ligand>
</feature>
<feature type="modified residue" description="N-acetylalanine" evidence="1">
    <location>
        <position position="2"/>
    </location>
</feature>
<organism>
    <name type="scientific">Colletotrichum gloeosporioides</name>
    <name type="common">Anthracnose fungus</name>
    <name type="synonym">Glomerella cingulata</name>
    <dbReference type="NCBI Taxonomy" id="474922"/>
    <lineage>
        <taxon>Eukaryota</taxon>
        <taxon>Fungi</taxon>
        <taxon>Dikarya</taxon>
        <taxon>Ascomycota</taxon>
        <taxon>Pezizomycotina</taxon>
        <taxon>Sordariomycetes</taxon>
        <taxon>Hypocreomycetidae</taxon>
        <taxon>Glomerellales</taxon>
        <taxon>Glomerellaceae</taxon>
        <taxon>Colletotrichum</taxon>
        <taxon>Colletotrichum gloeosporioides species complex</taxon>
    </lineage>
</organism>
<reference key="1">
    <citation type="journal article" date="1998" name="J. Bacteriol.">
        <title>Induction of Ca2+-calmodulin signaling by hard-surface contact primes Colletotrichum gloeosporioides conidia to germinate and form appressoria.</title>
        <authorList>
            <person name="Kim Y.K."/>
            <person name="Li D."/>
            <person name="Kolattukudy P.E."/>
        </authorList>
    </citation>
    <scope>NUCLEOTIDE SEQUENCE [MRNA]</scope>
</reference>
<protein>
    <recommendedName>
        <fullName>Calmodulin</fullName>
        <shortName>CaM</shortName>
    </recommendedName>
</protein>
<sequence>MADSLTEEQVSEFKEAFSLFDKDGDGQITTKELGTVMRSLGQNPSESELQDMINEVDADNNGTIDFPEFLTMMARKMKDTDSEEEIREAFKVFDRDNNGFISAAELRHVMTSIGEKLTDDEVDEMIREADQDGDGRIDYNEFVQLMMQK</sequence>